<protein>
    <recommendedName>
        <fullName evidence="1">Small ribosomal subunit protein uS3</fullName>
    </recommendedName>
    <alternativeName>
        <fullName evidence="3">30S ribosomal protein S3</fullName>
    </alternativeName>
</protein>
<gene>
    <name evidence="1" type="primary">rpsC</name>
    <name evidence="1" type="synonym">rps3</name>
    <name type="ordered locus">Ava_0697</name>
</gene>
<accession>Q3MFB5</accession>
<reference key="1">
    <citation type="journal article" date="2014" name="Stand. Genomic Sci.">
        <title>Complete genome sequence of Anabaena variabilis ATCC 29413.</title>
        <authorList>
            <person name="Thiel T."/>
            <person name="Pratte B.S."/>
            <person name="Zhong J."/>
            <person name="Goodwin L."/>
            <person name="Copeland A."/>
            <person name="Lucas S."/>
            <person name="Han C."/>
            <person name="Pitluck S."/>
            <person name="Land M.L."/>
            <person name="Kyrpides N.C."/>
            <person name="Woyke T."/>
        </authorList>
    </citation>
    <scope>NUCLEOTIDE SEQUENCE [LARGE SCALE GENOMIC DNA]</scope>
    <source>
        <strain>ATCC 29413 / PCC 7937</strain>
    </source>
</reference>
<name>RS3_TRIV2</name>
<sequence length="260" mass="29845">MGQKIHPVGFRLGITQEHQSRWFAEPSRYPELLQEDHKLRQYIEQKLGRLAQNNAGISEVRIERKADQIDLEVRTARPGVVVGRGGQGIEALRTGLQTLLGGNRQIRINVVEVQRVDADAYLIAEFIAQQLERRVSFRRVVRQAIQRAQKAGIQGIKVQVSGRLNGAEIARTEWTREGRVPLHTLRADIDYSYCTAKTVYGILGIKVWVFKGEIIPGQEVAAPPPSTRDRDRDRGDRDREPRRRQQQRRRQQFEDRSNEG</sequence>
<feature type="chain" id="PRO_0000230676" description="Small ribosomal subunit protein uS3">
    <location>
        <begin position="1"/>
        <end position="260"/>
    </location>
</feature>
<feature type="domain" description="KH type-2" evidence="1">
    <location>
        <begin position="39"/>
        <end position="114"/>
    </location>
</feature>
<feature type="region of interest" description="Disordered" evidence="2">
    <location>
        <begin position="219"/>
        <end position="260"/>
    </location>
</feature>
<feature type="compositionally biased region" description="Basic and acidic residues" evidence="2">
    <location>
        <begin position="227"/>
        <end position="243"/>
    </location>
</feature>
<feature type="compositionally biased region" description="Basic and acidic residues" evidence="2">
    <location>
        <begin position="251"/>
        <end position="260"/>
    </location>
</feature>
<organism>
    <name type="scientific">Trichormus variabilis (strain ATCC 29413 / PCC 7937)</name>
    <name type="common">Anabaena variabilis</name>
    <dbReference type="NCBI Taxonomy" id="240292"/>
    <lineage>
        <taxon>Bacteria</taxon>
        <taxon>Bacillati</taxon>
        <taxon>Cyanobacteriota</taxon>
        <taxon>Cyanophyceae</taxon>
        <taxon>Nostocales</taxon>
        <taxon>Nostocaceae</taxon>
        <taxon>Trichormus</taxon>
    </lineage>
</organism>
<comment type="function">
    <text evidence="1">Binds the lower part of the 30S subunit head. Binds mRNA in the 70S ribosome, positioning it for translation.</text>
</comment>
<comment type="subunit">
    <text evidence="1">Part of the 30S ribosomal subunit. Forms a tight complex with proteins S10 and S14.</text>
</comment>
<comment type="similarity">
    <text evidence="1">Belongs to the universal ribosomal protein uS3 family.</text>
</comment>
<evidence type="ECO:0000255" key="1">
    <source>
        <dbReference type="HAMAP-Rule" id="MF_01309"/>
    </source>
</evidence>
<evidence type="ECO:0000256" key="2">
    <source>
        <dbReference type="SAM" id="MobiDB-lite"/>
    </source>
</evidence>
<evidence type="ECO:0000305" key="3"/>
<keyword id="KW-0687">Ribonucleoprotein</keyword>
<keyword id="KW-0689">Ribosomal protein</keyword>
<keyword id="KW-0694">RNA-binding</keyword>
<keyword id="KW-0699">rRNA-binding</keyword>
<proteinExistence type="inferred from homology"/>
<dbReference type="EMBL" id="CP000117">
    <property type="protein sequence ID" value="ABA20321.1"/>
    <property type="molecule type" value="Genomic_DNA"/>
</dbReference>
<dbReference type="SMR" id="Q3MFB5"/>
<dbReference type="STRING" id="240292.Ava_0697"/>
<dbReference type="KEGG" id="ava:Ava_0697"/>
<dbReference type="eggNOG" id="COG0092">
    <property type="taxonomic scope" value="Bacteria"/>
</dbReference>
<dbReference type="HOGENOM" id="CLU_058591_0_2_3"/>
<dbReference type="Proteomes" id="UP000002533">
    <property type="component" value="Chromosome"/>
</dbReference>
<dbReference type="GO" id="GO:0022627">
    <property type="term" value="C:cytosolic small ribosomal subunit"/>
    <property type="evidence" value="ECO:0007669"/>
    <property type="project" value="TreeGrafter"/>
</dbReference>
<dbReference type="GO" id="GO:0003729">
    <property type="term" value="F:mRNA binding"/>
    <property type="evidence" value="ECO:0007669"/>
    <property type="project" value="UniProtKB-UniRule"/>
</dbReference>
<dbReference type="GO" id="GO:0019843">
    <property type="term" value="F:rRNA binding"/>
    <property type="evidence" value="ECO:0007669"/>
    <property type="project" value="UniProtKB-UniRule"/>
</dbReference>
<dbReference type="GO" id="GO:0003735">
    <property type="term" value="F:structural constituent of ribosome"/>
    <property type="evidence" value="ECO:0007669"/>
    <property type="project" value="InterPro"/>
</dbReference>
<dbReference type="GO" id="GO:0006412">
    <property type="term" value="P:translation"/>
    <property type="evidence" value="ECO:0007669"/>
    <property type="project" value="UniProtKB-UniRule"/>
</dbReference>
<dbReference type="CDD" id="cd02412">
    <property type="entry name" value="KH-II_30S_S3"/>
    <property type="match status" value="1"/>
</dbReference>
<dbReference type="FunFam" id="3.30.300.20:FF:000001">
    <property type="entry name" value="30S ribosomal protein S3"/>
    <property type="match status" value="1"/>
</dbReference>
<dbReference type="Gene3D" id="3.30.300.20">
    <property type="match status" value="1"/>
</dbReference>
<dbReference type="Gene3D" id="3.30.1140.32">
    <property type="entry name" value="Ribosomal protein S3, C-terminal domain"/>
    <property type="match status" value="1"/>
</dbReference>
<dbReference type="HAMAP" id="MF_01309_B">
    <property type="entry name" value="Ribosomal_uS3_B"/>
    <property type="match status" value="1"/>
</dbReference>
<dbReference type="InterPro" id="IPR004087">
    <property type="entry name" value="KH_dom"/>
</dbReference>
<dbReference type="InterPro" id="IPR015946">
    <property type="entry name" value="KH_dom-like_a/b"/>
</dbReference>
<dbReference type="InterPro" id="IPR004044">
    <property type="entry name" value="KH_dom_type_2"/>
</dbReference>
<dbReference type="InterPro" id="IPR009019">
    <property type="entry name" value="KH_sf_prok-type"/>
</dbReference>
<dbReference type="InterPro" id="IPR036419">
    <property type="entry name" value="Ribosomal_S3_C_sf"/>
</dbReference>
<dbReference type="InterPro" id="IPR005704">
    <property type="entry name" value="Ribosomal_uS3_bac-typ"/>
</dbReference>
<dbReference type="InterPro" id="IPR001351">
    <property type="entry name" value="Ribosomal_uS3_C"/>
</dbReference>
<dbReference type="InterPro" id="IPR018280">
    <property type="entry name" value="Ribosomal_uS3_CS"/>
</dbReference>
<dbReference type="NCBIfam" id="TIGR01009">
    <property type="entry name" value="rpsC_bact"/>
    <property type="match status" value="1"/>
</dbReference>
<dbReference type="PANTHER" id="PTHR11760">
    <property type="entry name" value="30S/40S RIBOSOMAL PROTEIN S3"/>
    <property type="match status" value="1"/>
</dbReference>
<dbReference type="PANTHER" id="PTHR11760:SF19">
    <property type="entry name" value="SMALL RIBOSOMAL SUBUNIT PROTEIN US3C"/>
    <property type="match status" value="1"/>
</dbReference>
<dbReference type="Pfam" id="PF07650">
    <property type="entry name" value="KH_2"/>
    <property type="match status" value="1"/>
</dbReference>
<dbReference type="Pfam" id="PF00189">
    <property type="entry name" value="Ribosomal_S3_C"/>
    <property type="match status" value="1"/>
</dbReference>
<dbReference type="SMART" id="SM00322">
    <property type="entry name" value="KH"/>
    <property type="match status" value="1"/>
</dbReference>
<dbReference type="SUPFAM" id="SSF54814">
    <property type="entry name" value="Prokaryotic type KH domain (KH-domain type II)"/>
    <property type="match status" value="1"/>
</dbReference>
<dbReference type="SUPFAM" id="SSF54821">
    <property type="entry name" value="Ribosomal protein S3 C-terminal domain"/>
    <property type="match status" value="1"/>
</dbReference>
<dbReference type="PROSITE" id="PS50823">
    <property type="entry name" value="KH_TYPE_2"/>
    <property type="match status" value="1"/>
</dbReference>
<dbReference type="PROSITE" id="PS00548">
    <property type="entry name" value="RIBOSOMAL_S3"/>
    <property type="match status" value="1"/>
</dbReference>